<proteinExistence type="evidence at protein level"/>
<dbReference type="EMBL" id="AJ312216">
    <property type="protein sequence ID" value="CAC59693.1"/>
    <property type="molecule type" value="mRNA"/>
</dbReference>
<dbReference type="EMBL" id="AJ303079">
    <property type="protein sequence ID" value="CAC38839.1"/>
    <property type="molecule type" value="mRNA"/>
</dbReference>
<dbReference type="EMBL" id="AB023137">
    <property type="protein sequence ID" value="BAA76764.2"/>
    <property type="status" value="ALT_INIT"/>
    <property type="molecule type" value="mRNA"/>
</dbReference>
<dbReference type="EMBL" id="AK057098">
    <property type="protein sequence ID" value="BAG51862.1"/>
    <property type="molecule type" value="mRNA"/>
</dbReference>
<dbReference type="EMBL" id="AK095003">
    <property type="protein sequence ID" value="BAC04472.1"/>
    <property type="molecule type" value="mRNA"/>
</dbReference>
<dbReference type="EMBL" id="AK300427">
    <property type="protein sequence ID" value="BAG62154.1"/>
    <property type="molecule type" value="mRNA"/>
</dbReference>
<dbReference type="EMBL" id="AL135789">
    <property type="status" value="NOT_ANNOTATED_CDS"/>
    <property type="molecule type" value="Genomic_DNA"/>
</dbReference>
<dbReference type="EMBL" id="AL158823">
    <property type="status" value="NOT_ANNOTATED_CDS"/>
    <property type="molecule type" value="Genomic_DNA"/>
</dbReference>
<dbReference type="EMBL" id="AL158829">
    <property type="status" value="NOT_ANNOTATED_CDS"/>
    <property type="molecule type" value="Genomic_DNA"/>
</dbReference>
<dbReference type="EMBL" id="AL353598">
    <property type="status" value="NOT_ANNOTATED_CDS"/>
    <property type="molecule type" value="Genomic_DNA"/>
</dbReference>
<dbReference type="EMBL" id="AL353806">
    <property type="status" value="NOT_ANNOTATED_CDS"/>
    <property type="molecule type" value="Genomic_DNA"/>
</dbReference>
<dbReference type="EMBL" id="AL627225">
    <property type="status" value="NOT_ANNOTATED_CDS"/>
    <property type="molecule type" value="Genomic_DNA"/>
</dbReference>
<dbReference type="EMBL" id="CH471105">
    <property type="protein sequence ID" value="EAW59057.1"/>
    <property type="molecule type" value="Genomic_DNA"/>
</dbReference>
<dbReference type="EMBL" id="BC039306">
    <property type="protein sequence ID" value="AAH39306.2"/>
    <property type="status" value="ALT_INIT"/>
    <property type="molecule type" value="mRNA"/>
</dbReference>
<dbReference type="EMBL" id="BC140818">
    <property type="protein sequence ID" value="AAI40819.1"/>
    <property type="molecule type" value="mRNA"/>
</dbReference>
<dbReference type="EMBL" id="BC146863">
    <property type="protein sequence ID" value="AAI46864.1"/>
    <property type="molecule type" value="mRNA"/>
</dbReference>
<dbReference type="EMBL" id="BC171800">
    <property type="protein sequence ID" value="AAI71800.1"/>
    <property type="molecule type" value="mRNA"/>
</dbReference>
<dbReference type="EMBL" id="AL110268">
    <property type="protein sequence ID" value="CAB53707.1"/>
    <property type="molecule type" value="mRNA"/>
</dbReference>
<dbReference type="CCDS" id="CCDS35099.1">
    <molecule id="Q9Y2D5-9"/>
</dbReference>
<dbReference type="CCDS" id="CCDS35100.1">
    <molecule id="Q9Y2D5-4"/>
</dbReference>
<dbReference type="CCDS" id="CCDS35101.1">
    <molecule id="Q9Y2D5-6"/>
</dbReference>
<dbReference type="CCDS" id="CCDS43861.1">
    <molecule id="Q9Y2D5-5"/>
</dbReference>
<dbReference type="CCDS" id="CCDS48002.2">
    <molecule id="Q9Y2D5-8"/>
</dbReference>
<dbReference type="CCDS" id="CCDS48003.1">
    <molecule id="Q9Y2D5-3"/>
</dbReference>
<dbReference type="CCDS" id="CCDS56581.1">
    <molecule id="Q9Y2D5-7"/>
</dbReference>
<dbReference type="PIR" id="T14787">
    <property type="entry name" value="T14787"/>
</dbReference>
<dbReference type="RefSeq" id="NP_001004065.2">
    <molecule id="Q9Y2D5-5"/>
    <property type="nucleotide sequence ID" value="NM_001004065.4"/>
</dbReference>
<dbReference type="RefSeq" id="NP_001032370.1">
    <molecule id="Q9Y2D5-9"/>
    <property type="nucleotide sequence ID" value="NM_001037293.3"/>
</dbReference>
<dbReference type="RefSeq" id="NP_001130034.1">
    <molecule id="Q9Y2D5-3"/>
    <property type="nucleotide sequence ID" value="NM_001136562.3"/>
</dbReference>
<dbReference type="RefSeq" id="NP_001185585.1">
    <molecule id="Q9Y2D5-7"/>
    <property type="nucleotide sequence ID" value="NM_001198656.1"/>
</dbReference>
<dbReference type="RefSeq" id="NP_009134.1">
    <molecule id="Q9Y2D5-4"/>
    <property type="nucleotide sequence ID" value="NM_007203.5"/>
</dbReference>
<dbReference type="RefSeq" id="NP_443749.5">
    <molecule id="Q9Y2D5-8"/>
    <property type="nucleotide sequence ID" value="NM_053016.5"/>
</dbReference>
<dbReference type="RefSeq" id="NP_671492.1">
    <molecule id="Q9Y2D5-6"/>
    <property type="nucleotide sequence ID" value="NM_147150.3"/>
</dbReference>
<dbReference type="SMR" id="Q9Y2D5"/>
<dbReference type="BioGRID" id="116386">
    <property type="interactions" value="73"/>
</dbReference>
<dbReference type="BioGRID" id="125312">
    <property type="interactions" value="72"/>
</dbReference>
<dbReference type="BioGRID" id="138657">
    <property type="interactions" value="40"/>
</dbReference>
<dbReference type="FunCoup" id="Q9Y2D5">
    <property type="interactions" value="487"/>
</dbReference>
<dbReference type="IntAct" id="Q9Y2D5">
    <property type="interactions" value="69"/>
</dbReference>
<dbReference type="MINT" id="Q9Y2D5"/>
<dbReference type="STRING" id="9606.ENSP00000363654"/>
<dbReference type="GlyGen" id="Q9Y2D5">
    <property type="glycosylation" value="1 site"/>
</dbReference>
<dbReference type="iPTMnet" id="Q9Y2D5"/>
<dbReference type="MetOSite" id="Q9Y2D5"/>
<dbReference type="PhosphoSitePlus" id="Q9Y2D5"/>
<dbReference type="SwissPalm" id="Q9Y2D5"/>
<dbReference type="BioMuta" id="AKAP2"/>
<dbReference type="BioMuta" id="PALM2"/>
<dbReference type="DMDM" id="124015203"/>
<dbReference type="DMDM" id="254763433"/>
<dbReference type="jPOST" id="Q9Y2D5"/>
<dbReference type="MassIVE" id="Q9Y2D5"/>
<dbReference type="PaxDb" id="9606-ENSP00000363654"/>
<dbReference type="PeptideAtlas" id="Q9Y2D5"/>
<dbReference type="ProteomicsDB" id="71057"/>
<dbReference type="ProteomicsDB" id="71058"/>
<dbReference type="ProteomicsDB" id="85738">
    <molecule id="Q9Y2D5-3"/>
</dbReference>
<dbReference type="ProteomicsDB" id="85739">
    <molecule id="Q9Y2D5-4"/>
</dbReference>
<dbReference type="ProteomicsDB" id="85740">
    <molecule id="Q9Y2D5-5"/>
</dbReference>
<dbReference type="ProteomicsDB" id="85741">
    <molecule id="Q9Y2D5-6"/>
</dbReference>
<dbReference type="ProteomicsDB" id="85742">
    <molecule id="Q9Y2D5-7"/>
</dbReference>
<dbReference type="Pumba" id="Q9Y2D5"/>
<dbReference type="Antibodypedia" id="56405">
    <property type="antibodies" value="57 antibodies from 19 providers"/>
</dbReference>
<dbReference type="DNASU" id="445815"/>
<dbReference type="Ensembl" id="ENST00000259318.7">
    <molecule id="Q9Y2D5-3"/>
    <property type="protein sequence ID" value="ENSP00000259318.7"/>
    <property type="gene ID" value="ENSG00000157654.19"/>
</dbReference>
<dbReference type="Ensembl" id="ENST00000302798.7">
    <molecule id="Q9Y2D5-6"/>
    <property type="protein sequence ID" value="ENSP00000305861.7"/>
    <property type="gene ID" value="ENSG00000157654.19"/>
</dbReference>
<dbReference type="Ensembl" id="ENST00000314527.9">
    <molecule id="Q9Y2D5-8"/>
    <property type="protein sequence ID" value="ENSP00000323805.4"/>
    <property type="gene ID" value="ENSG00000157654.19"/>
</dbReference>
<dbReference type="Ensembl" id="ENST00000374525.5">
    <molecule id="Q9Y2D5-5"/>
    <property type="protein sequence ID" value="ENSP00000363649.1"/>
    <property type="gene ID" value="ENSG00000157654.19"/>
</dbReference>
<dbReference type="Ensembl" id="ENST00000374530.8">
    <molecule id="Q9Y2D5-4"/>
    <property type="protein sequence ID" value="ENSP00000363654.3"/>
    <property type="gene ID" value="ENSG00000157654.19"/>
</dbReference>
<dbReference type="Ensembl" id="ENST00000374531.6">
    <molecule id="Q9Y2D5-9"/>
    <property type="protein sequence ID" value="ENSP00000363656.2"/>
    <property type="gene ID" value="ENSG00000157654.19"/>
</dbReference>
<dbReference type="Ensembl" id="ENST00000434623.6">
    <molecule id="Q9Y2D5-7"/>
    <property type="protein sequence ID" value="ENSP00000404782.2"/>
    <property type="gene ID" value="ENSG00000157654.19"/>
</dbReference>
<dbReference type="GeneID" id="445815"/>
<dbReference type="KEGG" id="hsa:445815"/>
<dbReference type="MANE-Select" id="ENST00000374530.8">
    <property type="protein sequence ID" value="ENSP00000363654.3"/>
    <property type="RefSeq nucleotide sequence ID" value="NM_007203.5"/>
    <property type="RefSeq protein sequence ID" value="NP_009134.1"/>
</dbReference>
<dbReference type="UCSC" id="uc004bem.4">
    <molecule id="Q9Y2D5-4"/>
    <property type="organism name" value="human"/>
</dbReference>
<dbReference type="AGR" id="HGNC:33529"/>
<dbReference type="CTD" id="445815"/>
<dbReference type="DisGeNET" id="445815"/>
<dbReference type="GeneCards" id="PALM2AKAP2"/>
<dbReference type="HGNC" id="HGNC:33529">
    <property type="gene designation" value="PALM2AKAP2"/>
</dbReference>
<dbReference type="HPA" id="ENSG00000157654">
    <property type="expression patterns" value="Low tissue specificity"/>
</dbReference>
<dbReference type="MalaCards" id="PALM2AKAP2"/>
<dbReference type="MIM" id="604582">
    <property type="type" value="gene"/>
</dbReference>
<dbReference type="neXtProt" id="NX_Q9Y2D5"/>
<dbReference type="OpenTargets" id="ENSG00000157654"/>
<dbReference type="PharmGKB" id="PA32924"/>
<dbReference type="VEuPathDB" id="HostDB:ENSG00000157654"/>
<dbReference type="eggNOG" id="ENOG502QR7I">
    <property type="taxonomic scope" value="Eukaryota"/>
</dbReference>
<dbReference type="eggNOG" id="ENOG502QSC7">
    <property type="taxonomic scope" value="Eukaryota"/>
</dbReference>
<dbReference type="GeneTree" id="ENSGT00930000151059"/>
<dbReference type="HOGENOM" id="CLU_007780_0_0_1"/>
<dbReference type="InParanoid" id="Q9Y2D5"/>
<dbReference type="OMA" id="RDNCSAN"/>
<dbReference type="OrthoDB" id="9941155at2759"/>
<dbReference type="PAN-GO" id="Q9Y2D5">
    <property type="GO annotations" value="0 GO annotations based on evolutionary models"/>
</dbReference>
<dbReference type="PhylomeDB" id="Q9Y2D5"/>
<dbReference type="TreeFam" id="TF105402"/>
<dbReference type="PathwayCommons" id="Q9Y2D5"/>
<dbReference type="SignaLink" id="Q9Y2D5"/>
<dbReference type="BioGRID-ORCS" id="11217">
    <property type="hits" value="11 hits in 1101 CRISPR screens"/>
</dbReference>
<dbReference type="BioGRID-ORCS" id="114299">
    <property type="hits" value="14 hits in 1113 CRISPR screens"/>
</dbReference>
<dbReference type="BioGRID-ORCS" id="445815">
    <property type="hits" value="113 hits in 1066 CRISPR screens"/>
</dbReference>
<dbReference type="CD-CODE" id="FB4E32DD">
    <property type="entry name" value="Presynaptic clusters and postsynaptic densities"/>
</dbReference>
<dbReference type="ChiTaRS" id="AKAP2">
    <property type="organism name" value="human"/>
</dbReference>
<dbReference type="ChiTaRS" id="PALM2">
    <property type="organism name" value="human"/>
</dbReference>
<dbReference type="GeneWiki" id="AKAP2"/>
<dbReference type="GenomeRNAi" id="114299"/>
<dbReference type="Pharos" id="Q9Y2D5">
    <property type="development level" value="Tbio"/>
</dbReference>
<dbReference type="PRO" id="PR:Q9Y2D5"/>
<dbReference type="Proteomes" id="UP000005640">
    <property type="component" value="Chromosome 9"/>
</dbReference>
<dbReference type="RNAct" id="Q9Y2D5">
    <property type="molecule type" value="protein"/>
</dbReference>
<dbReference type="ExpressionAtlas" id="Q9Y2D5">
    <property type="expression patterns" value="baseline and differential"/>
</dbReference>
<dbReference type="GO" id="GO:0016324">
    <property type="term" value="C:apical plasma membrane"/>
    <property type="evidence" value="ECO:0007669"/>
    <property type="project" value="UniProtKB-SubCell"/>
</dbReference>
<dbReference type="GO" id="GO:0098552">
    <property type="term" value="C:side of membrane"/>
    <property type="evidence" value="ECO:0007669"/>
    <property type="project" value="UniProtKB-KW"/>
</dbReference>
<dbReference type="GO" id="GO:0051018">
    <property type="term" value="F:protein kinase A binding"/>
    <property type="evidence" value="ECO:0007669"/>
    <property type="project" value="Ensembl"/>
</dbReference>
<dbReference type="GO" id="GO:0007015">
    <property type="term" value="P:actin filament organization"/>
    <property type="evidence" value="ECO:0007669"/>
    <property type="project" value="Ensembl"/>
</dbReference>
<dbReference type="GO" id="GO:0007178">
    <property type="term" value="P:cell surface receptor protein serine/threonine kinase signaling pathway"/>
    <property type="evidence" value="ECO:0007669"/>
    <property type="project" value="Ensembl"/>
</dbReference>
<dbReference type="GO" id="GO:0008104">
    <property type="term" value="P:protein localization"/>
    <property type="evidence" value="ECO:0007669"/>
    <property type="project" value="Ensembl"/>
</dbReference>
<dbReference type="GO" id="GO:0008360">
    <property type="term" value="P:regulation of cell shape"/>
    <property type="evidence" value="ECO:0007669"/>
    <property type="project" value="InterPro"/>
</dbReference>
<dbReference type="InterPro" id="IPR004965">
    <property type="entry name" value="Paralemmin"/>
</dbReference>
<dbReference type="PANTHER" id="PTHR10498:SF10">
    <property type="entry name" value="PALM2 AND AKAP2 FUSION-RELATED"/>
    <property type="match status" value="1"/>
</dbReference>
<dbReference type="PANTHER" id="PTHR10498">
    <property type="entry name" value="PARALEMMIN-RELATED"/>
    <property type="match status" value="1"/>
</dbReference>
<dbReference type="Pfam" id="PF03285">
    <property type="entry name" value="Paralemmin"/>
    <property type="match status" value="1"/>
</dbReference>
<evidence type="ECO:0000250" key="1">
    <source>
        <dbReference type="UniProtKB" id="O54931"/>
    </source>
</evidence>
<evidence type="ECO:0000250" key="2">
    <source>
        <dbReference type="UniProtKB" id="Q5U301"/>
    </source>
</evidence>
<evidence type="ECO:0000255" key="3"/>
<evidence type="ECO:0000256" key="4">
    <source>
        <dbReference type="SAM" id="MobiDB-lite"/>
    </source>
</evidence>
<evidence type="ECO:0000269" key="5">
    <source>
    </source>
</evidence>
<evidence type="ECO:0000269" key="6">
    <source>
    </source>
</evidence>
<evidence type="ECO:0000269" key="7">
    <source>
    </source>
</evidence>
<evidence type="ECO:0000303" key="8">
    <source>
    </source>
</evidence>
<evidence type="ECO:0000305" key="9"/>
<evidence type="ECO:0000312" key="10">
    <source>
        <dbReference type="HGNC" id="HGNC:33529"/>
    </source>
</evidence>
<evidence type="ECO:0007744" key="11">
    <source>
    </source>
</evidence>
<evidence type="ECO:0007744" key="12">
    <source>
    </source>
</evidence>
<evidence type="ECO:0007744" key="13">
    <source>
    </source>
</evidence>
<evidence type="ECO:0007744" key="14">
    <source>
    </source>
</evidence>
<evidence type="ECO:0007744" key="15">
    <source>
    </source>
</evidence>
<evidence type="ECO:0007744" key="16">
    <source>
    </source>
</evidence>
<evidence type="ECO:0007744" key="17">
    <source>
    </source>
</evidence>
<evidence type="ECO:0007744" key="18">
    <source>
    </source>
</evidence>
<protein>
    <recommendedName>
        <fullName evidence="9">PALM2-AKAP2 fusion protein</fullName>
    </recommendedName>
    <alternativeName>
        <fullName>A-kinase anchor protein 2</fullName>
        <shortName>AKAP-2</shortName>
    </alternativeName>
    <alternativeName>
        <fullName>AKAP-KL</fullName>
    </alternativeName>
    <alternativeName>
        <fullName evidence="1">Paralemmin A kinase anchor protein</fullName>
    </alternativeName>
    <alternativeName>
        <fullName evidence="8">Paralemmin-2</fullName>
    </alternativeName>
    <alternativeName>
        <fullName>Protein kinase A-anchoring protein 2</fullName>
        <shortName>PRKA2</shortName>
    </alternativeName>
</protein>
<organism>
    <name type="scientific">Homo sapiens</name>
    <name type="common">Human</name>
    <dbReference type="NCBI Taxonomy" id="9606"/>
    <lineage>
        <taxon>Eukaryota</taxon>
        <taxon>Metazoa</taxon>
        <taxon>Chordata</taxon>
        <taxon>Craniata</taxon>
        <taxon>Vertebrata</taxon>
        <taxon>Euteleostomi</taxon>
        <taxon>Mammalia</taxon>
        <taxon>Eutheria</taxon>
        <taxon>Euarchontoglires</taxon>
        <taxon>Primates</taxon>
        <taxon>Haplorrhini</taxon>
        <taxon>Catarrhini</taxon>
        <taxon>Hominidae</taxon>
        <taxon>Homo</taxon>
    </lineage>
</organism>
<comment type="function">
    <text evidence="1">Binds to regulatory subunit (RII) of protein kinase A. May be involved in establishing polarity in signaling systems or in integrating PKA-RII isoforms with downstream effectors to capture, amplify and focus diffuse, trans-cellular signals carried by cAMP. Binds to and modulates the structure of the actin cytoskeleton.</text>
</comment>
<comment type="interaction">
    <interactant intactId="EBI-1754555">
        <id>Q9Y2D5</id>
    </interactant>
    <interactant intactId="EBI-748974">
        <id>Q96CV9</id>
        <label>OPTN</label>
    </interactant>
    <organismsDiffer>false</organismsDiffer>
    <experiments>3</experiments>
</comment>
<comment type="subcellular location">
    <subcellularLocation>
        <location evidence="1">Apical cell membrane</location>
        <topology evidence="1">Lipid-anchor</topology>
        <topology evidence="1">GPI-like-anchor</topology>
        <orientation evidence="1">Cytoplasmic side</orientation>
    </subcellularLocation>
    <text evidence="1">Accumulates near the inner, apical surface of highly polarized epithelium in tubules of nephrons.</text>
</comment>
<comment type="alternative products">
    <event type="alternative splicing"/>
    <isoform>
        <id>Q9Y2D5-4</id>
        <name>3</name>
        <name>PALM2-AKAP2</name>
        <sequence type="displayed"/>
    </isoform>
    <isoform>
        <id>Q9Y2D5-3</id>
        <name>1</name>
        <sequence type="described" ref="VSP_062014 VSP_062022"/>
    </isoform>
    <isoform>
        <id>Q9Y2D5-5</id>
        <name>2</name>
        <sequence type="described" ref="VSP_062015 VSP_062022"/>
    </isoform>
    <isoform>
        <id>Q9Y2D5-6</id>
        <name>4</name>
        <sequence type="described" ref="VSP_062022"/>
    </isoform>
    <isoform>
        <id>Q9Y2D5-7</id>
        <name>5</name>
        <sequence type="described" ref="VSP_062015"/>
    </isoform>
    <isoform>
        <id>Q9Y2D5-8</id>
        <name>6</name>
        <name evidence="8">Palm2</name>
        <name evidence="8">Paralemmin-2</name>
        <sequence type="described" ref="VSP_062018 VSP_062020 VSP_062021"/>
    </isoform>
    <isoform>
        <id>Q9Y2D5-9</id>
        <name>7</name>
        <sequence type="described" ref="VSP_062016 VSP_062017 VSP_062019"/>
    </isoform>
</comment>
<comment type="tissue specificity">
    <molecule>Isoform 6</molecule>
    <text evidence="5">Expressed in infantile heart and muscle, and fibroblasts.</text>
</comment>
<comment type="domain">
    <text evidence="1">The RII-alpha binding site, predicted to form an amphipathic helix, could participate in protein-protein interactions with a complementary surface on the R-subunit dimer.</text>
</comment>
<comment type="miscellaneous">
    <molecule>Isoform 3</molecule>
    <text evidence="9">Based on a naturally occurring readthrough transcript which produces a PALM2-AKAP2 fusion protein.</text>
</comment>
<comment type="miscellaneous">
    <molecule>Isoform 4</molecule>
    <text evidence="9">Based on a naturally occurring readthrough transcript which produces a PALM2-AKAP2 fusion protein.</text>
</comment>
<comment type="sequence caution" evidence="9">
    <conflict type="erroneous initiation">
        <sequence resource="EMBL-CDS" id="AAH39306"/>
    </conflict>
    <text>Truncated N-terminus.</text>
</comment>
<comment type="sequence caution" evidence="9">
    <conflict type="erroneous initiation">
        <sequence resource="EMBL-CDS" id="BAA76764"/>
    </conflict>
    <text>Extended N-terminus.</text>
</comment>
<feature type="chain" id="PRO_0000064524" description="PALM2-AKAP2 fusion protein">
    <location>
        <begin position="1"/>
        <end position="1103"/>
    </location>
</feature>
<feature type="region of interest" description="Disordered" evidence="4">
    <location>
        <begin position="178"/>
        <end position="197"/>
    </location>
</feature>
<feature type="region of interest" description="Disordered" evidence="4">
    <location>
        <begin position="304"/>
        <end position="396"/>
    </location>
</feature>
<feature type="region of interest" description="Disordered" evidence="4">
    <location>
        <begin position="483"/>
        <end position="544"/>
    </location>
</feature>
<feature type="region of interest" description="Disordered" evidence="4">
    <location>
        <begin position="566"/>
        <end position="662"/>
    </location>
</feature>
<feature type="region of interest" description="Disordered" evidence="4">
    <location>
        <begin position="745"/>
        <end position="794"/>
    </location>
</feature>
<feature type="region of interest" description="PKA-RII subunit binding domain">
    <location>
        <begin position="797"/>
        <end position="810"/>
    </location>
</feature>
<feature type="region of interest" description="Disordered" evidence="4">
    <location>
        <begin position="817"/>
        <end position="907"/>
    </location>
</feature>
<feature type="region of interest" description="Disordered" evidence="4">
    <location>
        <begin position="962"/>
        <end position="1035"/>
    </location>
</feature>
<feature type="coiled-coil region" evidence="3">
    <location>
        <begin position="444"/>
        <end position="521"/>
    </location>
</feature>
<feature type="coiled-coil region" evidence="3">
    <location>
        <begin position="941"/>
        <end position="979"/>
    </location>
</feature>
<feature type="compositionally biased region" description="Polar residues" evidence="4">
    <location>
        <begin position="179"/>
        <end position="189"/>
    </location>
</feature>
<feature type="compositionally biased region" description="Low complexity" evidence="4">
    <location>
        <begin position="380"/>
        <end position="392"/>
    </location>
</feature>
<feature type="compositionally biased region" description="Basic and acidic residues" evidence="4">
    <location>
        <begin position="490"/>
        <end position="505"/>
    </location>
</feature>
<feature type="compositionally biased region" description="Low complexity" evidence="4">
    <location>
        <begin position="506"/>
        <end position="521"/>
    </location>
</feature>
<feature type="compositionally biased region" description="Polar residues" evidence="4">
    <location>
        <begin position="522"/>
        <end position="531"/>
    </location>
</feature>
<feature type="compositionally biased region" description="Basic and acidic residues" evidence="4">
    <location>
        <begin position="533"/>
        <end position="544"/>
    </location>
</feature>
<feature type="compositionally biased region" description="Polar residues" evidence="4">
    <location>
        <begin position="566"/>
        <end position="579"/>
    </location>
</feature>
<feature type="compositionally biased region" description="Polar residues" evidence="4">
    <location>
        <begin position="633"/>
        <end position="643"/>
    </location>
</feature>
<feature type="compositionally biased region" description="Polar residues" evidence="4">
    <location>
        <begin position="745"/>
        <end position="763"/>
    </location>
</feature>
<feature type="compositionally biased region" description="Basic and acidic residues" evidence="4">
    <location>
        <begin position="817"/>
        <end position="829"/>
    </location>
</feature>
<feature type="compositionally biased region" description="Basic and acidic residues" evidence="4">
    <location>
        <begin position="865"/>
        <end position="886"/>
    </location>
</feature>
<feature type="compositionally biased region" description="Polar residues" evidence="4">
    <location>
        <begin position="976"/>
        <end position="990"/>
    </location>
</feature>
<feature type="modified residue" description="Phosphoserine" evidence="16">
    <location>
        <position position="322"/>
    </location>
</feature>
<feature type="modified residue" description="Phosphoserine" evidence="12">
    <location>
        <position position="352"/>
    </location>
</feature>
<feature type="modified residue" description="Phosphoserine" evidence="12 13 14 15 16">
    <location>
        <position position="383"/>
    </location>
</feature>
<feature type="modified residue" description="Phosphoserine" evidence="2">
    <location>
        <position position="567"/>
    </location>
</feature>
<feature type="modified residue" description="Phosphoserine" evidence="11 12 13 14 15 16">
    <location>
        <position position="624"/>
    </location>
</feature>
<feature type="modified residue" description="Phosphoserine" evidence="13">
    <location>
        <position position="692"/>
    </location>
</feature>
<feature type="modified residue" description="Phosphoserine" evidence="2">
    <location>
        <position position="696"/>
    </location>
</feature>
<feature type="modified residue" description="Phosphoserine" evidence="16">
    <location>
        <position position="748"/>
    </location>
</feature>
<feature type="modified residue" description="Phosphothreonine" evidence="16">
    <location>
        <position position="757"/>
    </location>
</feature>
<feature type="modified residue" description="Phosphoserine" evidence="12 16">
    <location>
        <position position="862"/>
    </location>
</feature>
<feature type="modified residue" description="Phosphoserine" evidence="12 13">
    <location>
        <position position="951"/>
    </location>
</feature>
<feature type="modified residue" description="Phosphoserine" evidence="12 14 15">
    <location>
        <position position="979"/>
    </location>
</feature>
<feature type="modified residue" description="Phosphoserine" evidence="16">
    <location>
        <position position="1009"/>
    </location>
</feature>
<feature type="modified residue" description="Phosphoserine" evidence="16">
    <location>
        <position position="1016"/>
    </location>
</feature>
<feature type="cross-link" description="Glycyl lysine isopeptide (Lys-Gly) (interchain with G-Cter in SUMO1); alternate" evidence="17">
    <location>
        <position position="405"/>
    </location>
</feature>
<feature type="cross-link" description="Glycyl lysine isopeptide (Lys-Gly) (interchain with G-Cter in SUMO2); alternate" evidence="18">
    <location>
        <position position="405"/>
    </location>
</feature>
<feature type="splice variant" id="VSP_062014" description="In isoform 1.">
    <location>
        <begin position="1"/>
        <end position="231"/>
    </location>
</feature>
<feature type="splice variant" id="VSP_062015" description="In isoform 2 and isoform 5.">
    <original>MAEAELHKERLQAIAEKRKRQTEIEGKRQQLDEQILLLQHSKSKVLREKWLLQGIPAGTAEEEEARRRQSEEDEFRVKQLEDNIQRLEQEIQTLESEESQISAKEQIILEKLKETEKSFKDFQKGFSSTDGDAVNYISSQLPDLPILCSRTAEPSPGQDGTSRAAGVGWENVLLKEGESASNATETSGPDMTIK</original>
    <variation>MRWPQPGAAARLPPESPGPPESPGPPEREAAAARRWTGAEPQDCAPGSGRPE</variation>
    <location>
        <begin position="1"/>
        <end position="194"/>
    </location>
</feature>
<feature type="splice variant" id="VSP_062016" description="In isoform 7.">
    <original>M</original>
    <variation>MEM</variation>
    <location>
        <position position="1"/>
    </location>
</feature>
<feature type="splice variant" id="VSP_062017" description="In isoform 7.">
    <original>DAVNYISSQLPDLPILCSRTAEPSPGQDGTSRAAGVGWENVLLKEGESASNATETSGPDMTIKKPPQLSEDDIWLKSEGDNYSATLLEPAASSLSPDHKNMEIEVSVAECKSVPGITSTPHPMDHPSAFYSPPHNGLLTDHHESLDNDVAREIRYLDEVLEANCCDSAVDGTYNGTSSPEPGAVVLVGGLSPPVHEATQPEPTERTASRQAPPHIELSNSSPDPMAEAERTNGHSPSQPRDALGDS</original>
    <variation>AVYAMEINVEKDKQTGETKILSTSTIGPEGVHQKGVKVYDDGTKVVYEVRSGGTVVENGVHKLSTKDVEELIQKAGQSSLGGGHVSERTVIADGSLSHPKEHMLCKEAKLEMVHKSRKDHSSGNPGQQAQAPSAAGPEANLDQPVTMIFMGYQNIEDEEETKKVLGYDETIKAELVLIDEDDEKSLREKTVTDVSTIDGNAAELVSGRPVSDTTEPSSPEGKEESLATEPAPGTQKKKRCQCCVVM</variation>
    <location>
        <begin position="132"/>
        <end position="377"/>
    </location>
</feature>
<feature type="splice variant" id="VSP_062018" description="In isoform 6.">
    <original>GVGWENVLLKEGESASNATETSGPDMTIKKPPQLSEDDIWLKSEGDNYSATLLEPAASSLSPDHKNMEIEVSVAECKSVPGITSTPHPMDHPSAFYSPPHNGLLTDHHESLDNDVAREIRYLDEVLEANCCDSAVDGTYNGTSSPEPGAVVLVGGLSPPVHEATQPEPTERTASRQAPPHIELSNSSPDPMAEAERTNGHSPSQPRDALGDSLQVPVSPSSTTSSRCSSRDGEFTLTTLKKEAKFELRAFHEDKKPSKLFEDDEHEKEQYCIRKVRPSEEMLELEKERRELIRSQAVKKNPGIAAKWWNPPQEKTIEEQLDEEHLESHKKYKERKERRAQQEQLLLQKQLQQQQQQPPSQLCTAPASSHERASMIDKAKEDIVTEQIDFSAARKQFQLMENSRQAVAKGQSTPRLFSIKPFYRPLGSVNSDKPLTNPRPPSVGGPPEDSGASAAKGQKSPGALET</original>
    <variation>AVYAMEINVEKDKQTGETKILSTSTIGPEGVHQKGVKVYDDGTKVVYEVRSGGTVVENGVHKLSTKDVEELIQKAGQSSLGGGHVSERTVIADGSLSHPKEHMLCKEAKLEMVHKSRKDHSSGNPGQQAQA</variation>
    <location>
        <begin position="166"/>
        <end position="630"/>
    </location>
</feature>
<feature type="splice variant" id="VSP_062019" description="In isoform 7.">
    <location>
        <begin position="378"/>
        <end position="1103"/>
    </location>
</feature>
<feature type="splice variant" id="VSP_062020" description="In isoform 6.">
    <original>SQGNTASQGKEGPYSEPSKRGPLSKLWAEDGEFTSARAVLTVVKDDDHGILDQFSRSVNVSLTQEELDSGLDELSVRSQDTTVLETLSNDFSMDNISDSGASNETTNALQ</original>
    <variation>PEANLDQPVTMIFMGYQNIEDEEETKKVLGYDETIKAELVLIDEDDEKSLREKTVTDVSTIDGNAAELVSGRPVSDTTEPSSPEGKEESLATEPAPGTQKKKRCQCCVVM</variation>
    <location>
        <begin position="636"/>
        <end position="745"/>
    </location>
</feature>
<feature type="splice variant" id="VSP_062021" description="In isoform 6.">
    <location>
        <begin position="746"/>
        <end position="1103"/>
    </location>
</feature>
<feature type="splice variant" id="VSP_062022" description="In isoform 2, isoform 1 and isoform 4.">
    <original>SYTSKLLSCKVTSE</original>
    <variation>S</variation>
    <location>
        <begin position="1058"/>
        <end position="1071"/>
    </location>
</feature>
<feature type="sequence variant" id="VAR_024248" description="In dbSNP:rs914358." evidence="6 7">
    <original>L</original>
    <variation>S</variation>
    <location>
        <position position="792"/>
    </location>
</feature>
<feature type="sequence conflict" description="In Ref. 4; BAC04472." evidence="9" ref="4">
    <location>
        <begin position="63"/>
        <end position="72"/>
    </location>
</feature>
<feature type="sequence conflict" description="In Ref. 4; BAG51862/BAG62154 and 7; AAI46864/AAI71800." evidence="9" ref="4 7">
    <original>K</original>
    <variation>Q</variation>
    <location>
        <position position="513"/>
    </location>
</feature>
<feature type="sequence conflict" description="In Ref. 8; CAB53707." evidence="9" ref="8">
    <original>E</original>
    <variation>G</variation>
    <location>
        <position position="878"/>
    </location>
</feature>
<feature type="sequence conflict" description="In Ref. 4; BAG51862." evidence="9" ref="4">
    <original>L</original>
    <variation>P</variation>
    <location>
        <position position="882"/>
    </location>
</feature>
<feature type="sequence conflict" description="In Ref. 4; BAG51862." evidence="9" ref="4">
    <original>L</original>
    <variation>S</variation>
    <location>
        <position position="950"/>
    </location>
</feature>
<feature type="sequence conflict" description="In Ref. 7; AAI46864." evidence="9" ref="7">
    <original>P</original>
    <variation>L</variation>
    <location sequence="Q9Y2D5-5">
        <position position="20"/>
    </location>
</feature>
<keyword id="KW-0025">Alternative splicing</keyword>
<keyword id="KW-1003">Cell membrane</keyword>
<keyword id="KW-0175">Coiled coil</keyword>
<keyword id="KW-0325">Glycoprotein</keyword>
<keyword id="KW-0336">GPI-anchor</keyword>
<keyword id="KW-1017">Isopeptide bond</keyword>
<keyword id="KW-0449">Lipoprotein</keyword>
<keyword id="KW-0472">Membrane</keyword>
<keyword id="KW-0597">Phosphoprotein</keyword>
<keyword id="KW-1267">Proteomics identification</keyword>
<keyword id="KW-1185">Reference proteome</keyword>
<keyword id="KW-0832">Ubl conjugation</keyword>
<name>PLAK2_HUMAN</name>
<reference key="1">
    <citation type="journal article" date="2001" name="Biochem. Biophys. Res. Commun.">
        <title>The paralemmin protein family: identification of paralemmin-2, an isoform differentially spliced to AKAP2/AKAP-KL, and of palmdelphin, a more distant cytosolic relative.</title>
        <authorList>
            <person name="Hu B."/>
            <person name="Copeland N.G."/>
            <person name="Gilbert D.J."/>
            <person name="Jenkins N.A."/>
            <person name="Kilimann M.W."/>
        </authorList>
    </citation>
    <scope>NUCLEOTIDE SEQUENCE [MRNA] (ISOFORM 6)</scope>
    <scope>TISSUE SPECIFICITY</scope>
    <source>
        <tissue>Muscle</tissue>
    </source>
</reference>
<reference key="2">
    <citation type="submission" date="2000-12" db="EMBL/GenBank/DDBJ databases">
        <title>Homo sapiens AKAP-2 complete cDNA sequence.</title>
        <authorList>
            <person name="Schuetze N."/>
            <person name="Reichel S."/>
            <person name="Ruecker N."/>
            <person name="Lechner A."/>
            <person name="Eulert J."/>
            <person name="Jakob F."/>
        </authorList>
    </citation>
    <scope>NUCLEOTIDE SEQUENCE [MRNA] (ISOFORM 3)</scope>
</reference>
<reference key="3">
    <citation type="journal article" date="1999" name="DNA Res.">
        <title>Prediction of the coding sequences of unidentified human genes. XIII. The complete sequences of 100 new cDNA clones from brain which code for large proteins in vitro.</title>
        <authorList>
            <person name="Nagase T."/>
            <person name="Ishikawa K."/>
            <person name="Suyama M."/>
            <person name="Kikuno R."/>
            <person name="Hirosawa M."/>
            <person name="Miyajima N."/>
            <person name="Tanaka A."/>
            <person name="Kotani H."/>
            <person name="Nomura N."/>
            <person name="Ohara O."/>
        </authorList>
    </citation>
    <scope>NUCLEOTIDE SEQUENCE [LARGE SCALE MRNA] (ISOFORM 3)</scope>
    <source>
        <tissue>Brain</tissue>
    </source>
</reference>
<reference key="4">
    <citation type="journal article" date="2004" name="Nat. Genet.">
        <title>Complete sequencing and characterization of 21,243 full-length human cDNAs.</title>
        <authorList>
            <person name="Ota T."/>
            <person name="Suzuki Y."/>
            <person name="Nishikawa T."/>
            <person name="Otsuki T."/>
            <person name="Sugiyama T."/>
            <person name="Irie R."/>
            <person name="Wakamatsu A."/>
            <person name="Hayashi K."/>
            <person name="Sato H."/>
            <person name="Nagai K."/>
            <person name="Kimura K."/>
            <person name="Makita H."/>
            <person name="Sekine M."/>
            <person name="Obayashi M."/>
            <person name="Nishi T."/>
            <person name="Shibahara T."/>
            <person name="Tanaka T."/>
            <person name="Ishii S."/>
            <person name="Yamamoto J."/>
            <person name="Saito K."/>
            <person name="Kawai Y."/>
            <person name="Isono Y."/>
            <person name="Nakamura Y."/>
            <person name="Nagahari K."/>
            <person name="Murakami K."/>
            <person name="Yasuda T."/>
            <person name="Iwayanagi T."/>
            <person name="Wagatsuma M."/>
            <person name="Shiratori A."/>
            <person name="Sudo H."/>
            <person name="Hosoiri T."/>
            <person name="Kaku Y."/>
            <person name="Kodaira H."/>
            <person name="Kondo H."/>
            <person name="Sugawara M."/>
            <person name="Takahashi M."/>
            <person name="Kanda K."/>
            <person name="Yokoi T."/>
            <person name="Furuya T."/>
            <person name="Kikkawa E."/>
            <person name="Omura Y."/>
            <person name="Abe K."/>
            <person name="Kamihara K."/>
            <person name="Katsuta N."/>
            <person name="Sato K."/>
            <person name="Tanikawa M."/>
            <person name="Yamazaki M."/>
            <person name="Ninomiya K."/>
            <person name="Ishibashi T."/>
            <person name="Yamashita H."/>
            <person name="Murakawa K."/>
            <person name="Fujimori K."/>
            <person name="Tanai H."/>
            <person name="Kimata M."/>
            <person name="Watanabe M."/>
            <person name="Hiraoka S."/>
            <person name="Chiba Y."/>
            <person name="Ishida S."/>
            <person name="Ono Y."/>
            <person name="Takiguchi S."/>
            <person name="Watanabe S."/>
            <person name="Yosida M."/>
            <person name="Hotuta T."/>
            <person name="Kusano J."/>
            <person name="Kanehori K."/>
            <person name="Takahashi-Fujii A."/>
            <person name="Hara H."/>
            <person name="Tanase T.-O."/>
            <person name="Nomura Y."/>
            <person name="Togiya S."/>
            <person name="Komai F."/>
            <person name="Hara R."/>
            <person name="Takeuchi K."/>
            <person name="Arita M."/>
            <person name="Imose N."/>
            <person name="Musashino K."/>
            <person name="Yuuki H."/>
            <person name="Oshima A."/>
            <person name="Sasaki N."/>
            <person name="Aotsuka S."/>
            <person name="Yoshikawa Y."/>
            <person name="Matsunawa H."/>
            <person name="Ichihara T."/>
            <person name="Shiohata N."/>
            <person name="Sano S."/>
            <person name="Moriya S."/>
            <person name="Momiyama H."/>
            <person name="Satoh N."/>
            <person name="Takami S."/>
            <person name="Terashima Y."/>
            <person name="Suzuki O."/>
            <person name="Nakagawa S."/>
            <person name="Senoh A."/>
            <person name="Mizoguchi H."/>
            <person name="Goto Y."/>
            <person name="Shimizu F."/>
            <person name="Wakebe H."/>
            <person name="Hishigaki H."/>
            <person name="Watanabe T."/>
            <person name="Sugiyama A."/>
            <person name="Takemoto M."/>
            <person name="Kawakami B."/>
            <person name="Yamazaki M."/>
            <person name="Watanabe K."/>
            <person name="Kumagai A."/>
            <person name="Itakura S."/>
            <person name="Fukuzumi Y."/>
            <person name="Fujimori Y."/>
            <person name="Komiyama M."/>
            <person name="Tashiro H."/>
            <person name="Tanigami A."/>
            <person name="Fujiwara T."/>
            <person name="Ono T."/>
            <person name="Yamada K."/>
            <person name="Fujii Y."/>
            <person name="Ozaki K."/>
            <person name="Hirao M."/>
            <person name="Ohmori Y."/>
            <person name="Kawabata A."/>
            <person name="Hikiji T."/>
            <person name="Kobatake N."/>
            <person name="Inagaki H."/>
            <person name="Ikema Y."/>
            <person name="Okamoto S."/>
            <person name="Okitani R."/>
            <person name="Kawakami T."/>
            <person name="Noguchi S."/>
            <person name="Itoh T."/>
            <person name="Shigeta K."/>
            <person name="Senba T."/>
            <person name="Matsumura K."/>
            <person name="Nakajima Y."/>
            <person name="Mizuno T."/>
            <person name="Morinaga M."/>
            <person name="Sasaki M."/>
            <person name="Togashi T."/>
            <person name="Oyama M."/>
            <person name="Hata H."/>
            <person name="Watanabe M."/>
            <person name="Komatsu T."/>
            <person name="Mizushima-Sugano J."/>
            <person name="Satoh T."/>
            <person name="Shirai Y."/>
            <person name="Takahashi Y."/>
            <person name="Nakagawa K."/>
            <person name="Okumura K."/>
            <person name="Nagase T."/>
            <person name="Nomura N."/>
            <person name="Kikuchi H."/>
            <person name="Masuho Y."/>
            <person name="Yamashita R."/>
            <person name="Nakai K."/>
            <person name="Yada T."/>
            <person name="Nakamura Y."/>
            <person name="Ohara O."/>
            <person name="Isogai T."/>
            <person name="Sugano S."/>
        </authorList>
    </citation>
    <scope>NUCLEOTIDE SEQUENCE [LARGE SCALE MRNA] (ISOFORMS 1; 2 AND 7)</scope>
    <scope>VARIANT SER-792</scope>
    <source>
        <tissue>Placenta</tissue>
        <tissue>Small intestine</tissue>
    </source>
</reference>
<reference key="5">
    <citation type="journal article" date="2004" name="Nature">
        <title>DNA sequence and analysis of human chromosome 9.</title>
        <authorList>
            <person name="Humphray S.J."/>
            <person name="Oliver K."/>
            <person name="Hunt A.R."/>
            <person name="Plumb R.W."/>
            <person name="Loveland J.E."/>
            <person name="Howe K.L."/>
            <person name="Andrews T.D."/>
            <person name="Searle S."/>
            <person name="Hunt S.E."/>
            <person name="Scott C.E."/>
            <person name="Jones M.C."/>
            <person name="Ainscough R."/>
            <person name="Almeida J.P."/>
            <person name="Ambrose K.D."/>
            <person name="Ashwell R.I.S."/>
            <person name="Babbage A.K."/>
            <person name="Babbage S."/>
            <person name="Bagguley C.L."/>
            <person name="Bailey J."/>
            <person name="Banerjee R."/>
            <person name="Barker D.J."/>
            <person name="Barlow K.F."/>
            <person name="Bates K."/>
            <person name="Beasley H."/>
            <person name="Beasley O."/>
            <person name="Bird C.P."/>
            <person name="Bray-Allen S."/>
            <person name="Brown A.J."/>
            <person name="Brown J.Y."/>
            <person name="Burford D."/>
            <person name="Burrill W."/>
            <person name="Burton J."/>
            <person name="Carder C."/>
            <person name="Carter N.P."/>
            <person name="Chapman J.C."/>
            <person name="Chen Y."/>
            <person name="Clarke G."/>
            <person name="Clark S.Y."/>
            <person name="Clee C.M."/>
            <person name="Clegg S."/>
            <person name="Collier R.E."/>
            <person name="Corby N."/>
            <person name="Crosier M."/>
            <person name="Cummings A.T."/>
            <person name="Davies J."/>
            <person name="Dhami P."/>
            <person name="Dunn M."/>
            <person name="Dutta I."/>
            <person name="Dyer L.W."/>
            <person name="Earthrowl M.E."/>
            <person name="Faulkner L."/>
            <person name="Fleming C.J."/>
            <person name="Frankish A."/>
            <person name="Frankland J.A."/>
            <person name="French L."/>
            <person name="Fricker D.G."/>
            <person name="Garner P."/>
            <person name="Garnett J."/>
            <person name="Ghori J."/>
            <person name="Gilbert J.G.R."/>
            <person name="Glison C."/>
            <person name="Grafham D.V."/>
            <person name="Gribble S."/>
            <person name="Griffiths C."/>
            <person name="Griffiths-Jones S."/>
            <person name="Grocock R."/>
            <person name="Guy J."/>
            <person name="Hall R.E."/>
            <person name="Hammond S."/>
            <person name="Harley J.L."/>
            <person name="Harrison E.S.I."/>
            <person name="Hart E.A."/>
            <person name="Heath P.D."/>
            <person name="Henderson C.D."/>
            <person name="Hopkins B.L."/>
            <person name="Howard P.J."/>
            <person name="Howden P.J."/>
            <person name="Huckle E."/>
            <person name="Johnson C."/>
            <person name="Johnson D."/>
            <person name="Joy A.A."/>
            <person name="Kay M."/>
            <person name="Keenan S."/>
            <person name="Kershaw J.K."/>
            <person name="Kimberley A.M."/>
            <person name="King A."/>
            <person name="Knights A."/>
            <person name="Laird G.K."/>
            <person name="Langford C."/>
            <person name="Lawlor S."/>
            <person name="Leongamornlert D.A."/>
            <person name="Leversha M."/>
            <person name="Lloyd C."/>
            <person name="Lloyd D.M."/>
            <person name="Lovell J."/>
            <person name="Martin S."/>
            <person name="Mashreghi-Mohammadi M."/>
            <person name="Matthews L."/>
            <person name="McLaren S."/>
            <person name="McLay K.E."/>
            <person name="McMurray A."/>
            <person name="Milne S."/>
            <person name="Nickerson T."/>
            <person name="Nisbett J."/>
            <person name="Nordsiek G."/>
            <person name="Pearce A.V."/>
            <person name="Peck A.I."/>
            <person name="Porter K.M."/>
            <person name="Pandian R."/>
            <person name="Pelan S."/>
            <person name="Phillimore B."/>
            <person name="Povey S."/>
            <person name="Ramsey Y."/>
            <person name="Rand V."/>
            <person name="Scharfe M."/>
            <person name="Sehra H.K."/>
            <person name="Shownkeen R."/>
            <person name="Sims S.K."/>
            <person name="Skuce C.D."/>
            <person name="Smith M."/>
            <person name="Steward C.A."/>
            <person name="Swarbreck D."/>
            <person name="Sycamore N."/>
            <person name="Tester J."/>
            <person name="Thorpe A."/>
            <person name="Tracey A."/>
            <person name="Tromans A."/>
            <person name="Thomas D.W."/>
            <person name="Wall M."/>
            <person name="Wallis J.M."/>
            <person name="West A.P."/>
            <person name="Whitehead S.L."/>
            <person name="Willey D.L."/>
            <person name="Williams S.A."/>
            <person name="Wilming L."/>
            <person name="Wray P.W."/>
            <person name="Young L."/>
            <person name="Ashurst J.L."/>
            <person name="Coulson A."/>
            <person name="Blocker H."/>
            <person name="Durbin R.M."/>
            <person name="Sulston J.E."/>
            <person name="Hubbard T."/>
            <person name="Jackson M.J."/>
            <person name="Bentley D.R."/>
            <person name="Beck S."/>
            <person name="Rogers J."/>
            <person name="Dunham I."/>
        </authorList>
    </citation>
    <scope>NUCLEOTIDE SEQUENCE [LARGE SCALE GENOMIC DNA]</scope>
</reference>
<reference key="6">
    <citation type="submission" date="2005-07" db="EMBL/GenBank/DDBJ databases">
        <authorList>
            <person name="Mural R.J."/>
            <person name="Istrail S."/>
            <person name="Sutton G.G."/>
            <person name="Florea L."/>
            <person name="Halpern A.L."/>
            <person name="Mobarry C.M."/>
            <person name="Lippert R."/>
            <person name="Walenz B."/>
            <person name="Shatkay H."/>
            <person name="Dew I."/>
            <person name="Miller J.R."/>
            <person name="Flanigan M.J."/>
            <person name="Edwards N.J."/>
            <person name="Bolanos R."/>
            <person name="Fasulo D."/>
            <person name="Halldorsson B.V."/>
            <person name="Hannenhalli S."/>
            <person name="Turner R."/>
            <person name="Yooseph S."/>
            <person name="Lu F."/>
            <person name="Nusskern D.R."/>
            <person name="Shue B.C."/>
            <person name="Zheng X.H."/>
            <person name="Zhong F."/>
            <person name="Delcher A.L."/>
            <person name="Huson D.H."/>
            <person name="Kravitz S.A."/>
            <person name="Mouchard L."/>
            <person name="Reinert K."/>
            <person name="Remington K.A."/>
            <person name="Clark A.G."/>
            <person name="Waterman M.S."/>
            <person name="Eichler E.E."/>
            <person name="Adams M.D."/>
            <person name="Hunkapiller M.W."/>
            <person name="Myers E.W."/>
            <person name="Venter J.C."/>
        </authorList>
    </citation>
    <scope>NUCLEOTIDE SEQUENCE [LARGE SCALE GENOMIC DNA]</scope>
</reference>
<reference key="7">
    <citation type="journal article" date="2004" name="Genome Res.">
        <title>The status, quality, and expansion of the NIH full-length cDNA project: the Mammalian Gene Collection (MGC).</title>
        <authorList>
            <consortium name="The MGC Project Team"/>
        </authorList>
    </citation>
    <scope>NUCLEOTIDE SEQUENCE [LARGE SCALE MRNA] (ISOFORMS 2; 4; 5 AND 7)</scope>
    <scope>VARIANT SER-792</scope>
    <source>
        <tissue>Brain</tissue>
    </source>
</reference>
<reference key="8">
    <citation type="journal article" date="2007" name="BMC Genomics">
        <title>The full-ORF clone resource of the German cDNA consortium.</title>
        <authorList>
            <person name="Bechtel S."/>
            <person name="Rosenfelder H."/>
            <person name="Duda A."/>
            <person name="Schmidt C.P."/>
            <person name="Ernst U."/>
            <person name="Wellenreuther R."/>
            <person name="Mehrle A."/>
            <person name="Schuster C."/>
            <person name="Bahr A."/>
            <person name="Bloecker H."/>
            <person name="Heubner D."/>
            <person name="Hoerlein A."/>
            <person name="Michel G."/>
            <person name="Wedler H."/>
            <person name="Koehrer K."/>
            <person name="Ottenwaelder B."/>
            <person name="Poustka A."/>
            <person name="Wiemann S."/>
            <person name="Schupp I."/>
        </authorList>
    </citation>
    <scope>NUCLEOTIDE SEQUENCE [LARGE SCALE MRNA] OF 770-1103 (ISOFORMS 1/2/4)</scope>
    <source>
        <tissue>Brain</tissue>
    </source>
</reference>
<reference key="9">
    <citation type="journal article" date="2006" name="Cell">
        <title>Global, in vivo, and site-specific phosphorylation dynamics in signaling networks.</title>
        <authorList>
            <person name="Olsen J.V."/>
            <person name="Blagoev B."/>
            <person name="Gnad F."/>
            <person name="Macek B."/>
            <person name="Kumar C."/>
            <person name="Mortensen P."/>
            <person name="Mann M."/>
        </authorList>
    </citation>
    <scope>IDENTIFICATION BY MASS SPECTROMETRY [LARGE SCALE ANALYSIS]</scope>
    <source>
        <tissue>Cervix carcinoma</tissue>
    </source>
</reference>
<reference key="10">
    <citation type="journal article" date="2008" name="J. Proteome Res.">
        <title>Combining protein-based IMAC, peptide-based IMAC, and MudPIT for efficient phosphoproteomic analysis.</title>
        <authorList>
            <person name="Cantin G.T."/>
            <person name="Yi W."/>
            <person name="Lu B."/>
            <person name="Park S.K."/>
            <person name="Xu T."/>
            <person name="Lee J.-D."/>
            <person name="Yates J.R. III"/>
        </authorList>
    </citation>
    <scope>PHOSPHORYLATION [LARGE SCALE ANALYSIS] AT SER-624</scope>
    <scope>IDENTIFICATION BY MASS SPECTROMETRY [LARGE SCALE ANALYSIS]</scope>
    <source>
        <tissue>Cervix carcinoma</tissue>
    </source>
</reference>
<reference key="11">
    <citation type="journal article" date="2008" name="Proc. Natl. Acad. Sci. U.S.A.">
        <title>A quantitative atlas of mitotic phosphorylation.</title>
        <authorList>
            <person name="Dephoure N."/>
            <person name="Zhou C."/>
            <person name="Villen J."/>
            <person name="Beausoleil S.A."/>
            <person name="Bakalarski C.E."/>
            <person name="Elledge S.J."/>
            <person name="Gygi S.P."/>
        </authorList>
    </citation>
    <scope>PHOSPHORYLATION [LARGE SCALE ANALYSIS] AT SER-352; SER-383; SER-624; SER-862; SER-951 AND SER-979</scope>
    <scope>IDENTIFICATION BY MASS SPECTROMETRY [LARGE SCALE ANALYSIS]</scope>
    <source>
        <tissue>Cervix carcinoma</tissue>
    </source>
</reference>
<reference key="12">
    <citation type="journal article" date="2009" name="Anal. Chem.">
        <title>Lys-N and trypsin cover complementary parts of the phosphoproteome in a refined SCX-based approach.</title>
        <authorList>
            <person name="Gauci S."/>
            <person name="Helbig A.O."/>
            <person name="Slijper M."/>
            <person name="Krijgsveld J."/>
            <person name="Heck A.J."/>
            <person name="Mohammed S."/>
        </authorList>
    </citation>
    <scope>IDENTIFICATION BY MASS SPECTROMETRY [LARGE SCALE ANALYSIS]</scope>
</reference>
<reference key="13">
    <citation type="journal article" date="2009" name="Sci. Signal.">
        <title>Quantitative phosphoproteomic analysis of T cell receptor signaling reveals system-wide modulation of protein-protein interactions.</title>
        <authorList>
            <person name="Mayya V."/>
            <person name="Lundgren D.H."/>
            <person name="Hwang S.-I."/>
            <person name="Rezaul K."/>
            <person name="Wu L."/>
            <person name="Eng J.K."/>
            <person name="Rodionov V."/>
            <person name="Han D.K."/>
        </authorList>
    </citation>
    <scope>PHOSPHORYLATION [LARGE SCALE ANALYSIS] AT SER-383; SER-624; SER-692 AND SER-951</scope>
    <scope>IDENTIFICATION BY MASS SPECTROMETRY [LARGE SCALE ANALYSIS]</scope>
    <source>
        <tissue>Leukemic T-cell</tissue>
    </source>
</reference>
<reference key="14">
    <citation type="journal article" date="2010" name="Sci. Signal.">
        <title>Quantitative phosphoproteomics reveals widespread full phosphorylation site occupancy during mitosis.</title>
        <authorList>
            <person name="Olsen J.V."/>
            <person name="Vermeulen M."/>
            <person name="Santamaria A."/>
            <person name="Kumar C."/>
            <person name="Miller M.L."/>
            <person name="Jensen L.J."/>
            <person name="Gnad F."/>
            <person name="Cox J."/>
            <person name="Jensen T.S."/>
            <person name="Nigg E.A."/>
            <person name="Brunak S."/>
            <person name="Mann M."/>
        </authorList>
    </citation>
    <scope>PHOSPHORYLATION [LARGE SCALE ANALYSIS] AT SER-383; SER-624 AND SER-979</scope>
    <scope>IDENTIFICATION BY MASS SPECTROMETRY [LARGE SCALE ANALYSIS]</scope>
    <source>
        <tissue>Cervix carcinoma</tissue>
    </source>
</reference>
<reference key="15">
    <citation type="journal article" date="2011" name="Sci. Signal.">
        <title>System-wide temporal characterization of the proteome and phosphoproteome of human embryonic stem cell differentiation.</title>
        <authorList>
            <person name="Rigbolt K.T."/>
            <person name="Prokhorova T.A."/>
            <person name="Akimov V."/>
            <person name="Henningsen J."/>
            <person name="Johansen P.T."/>
            <person name="Kratchmarova I."/>
            <person name="Kassem M."/>
            <person name="Mann M."/>
            <person name="Olsen J.V."/>
            <person name="Blagoev B."/>
        </authorList>
    </citation>
    <scope>PHOSPHORYLATION [LARGE SCALE ANALYSIS] AT SER-383; SER-624 AND SER-979</scope>
    <scope>IDENTIFICATION BY MASS SPECTROMETRY [LARGE SCALE ANALYSIS]</scope>
</reference>
<reference key="16">
    <citation type="journal article" date="2014" name="J. Proteomics">
        <title>An enzyme assisted RP-RPLC approach for in-depth analysis of human liver phosphoproteome.</title>
        <authorList>
            <person name="Bian Y."/>
            <person name="Song C."/>
            <person name="Cheng K."/>
            <person name="Dong M."/>
            <person name="Wang F."/>
            <person name="Huang J."/>
            <person name="Sun D."/>
            <person name="Wang L."/>
            <person name="Ye M."/>
            <person name="Zou H."/>
        </authorList>
    </citation>
    <scope>PHOSPHORYLATION [LARGE SCALE ANALYSIS] AT SER-322; SER-383; SER-624; SER-748; THR-757; SER-862; SER-1009 AND SER-1016</scope>
    <scope>IDENTIFICATION BY MASS SPECTROMETRY [LARGE SCALE ANALYSIS]</scope>
    <source>
        <tissue>Liver</tissue>
    </source>
</reference>
<reference key="17">
    <citation type="journal article" date="2014" name="Proc. Natl. Acad. Sci. U.S.A.">
        <title>Mapping of SUMO sites and analysis of SUMOylation changes induced by external stimuli.</title>
        <authorList>
            <person name="Impens F."/>
            <person name="Radoshevich L."/>
            <person name="Cossart P."/>
            <person name="Ribet D."/>
        </authorList>
    </citation>
    <scope>SUMOYLATION [LARGE SCALE ANALYSIS] AT LYS-405</scope>
    <scope>IDENTIFICATION BY MASS SPECTROMETRY [LARGE SCALE ANALYSIS]</scope>
</reference>
<reference key="18">
    <citation type="journal article" date="2015" name="Proteomics">
        <title>N-terminome analysis of the human mitochondrial proteome.</title>
        <authorList>
            <person name="Vaca Jacome A.S."/>
            <person name="Rabilloud T."/>
            <person name="Schaeffer-Reiss C."/>
            <person name="Rompais M."/>
            <person name="Ayoub D."/>
            <person name="Lane L."/>
            <person name="Bairoch A."/>
            <person name="Van Dorsselaer A."/>
            <person name="Carapito C."/>
        </authorList>
    </citation>
    <scope>IDENTIFICATION BY MASS SPECTROMETRY [LARGE SCALE ANALYSIS]</scope>
</reference>
<reference key="19">
    <citation type="journal article" date="2017" name="Nat. Struct. Mol. Biol.">
        <title>Site-specific mapping of the human SUMO proteome reveals co-modification with phosphorylation.</title>
        <authorList>
            <person name="Hendriks I.A."/>
            <person name="Lyon D."/>
            <person name="Young C."/>
            <person name="Jensen L.J."/>
            <person name="Vertegaal A.C."/>
            <person name="Nielsen M.L."/>
        </authorList>
    </citation>
    <scope>SUMOYLATION [LARGE SCALE ANALYSIS] AT LYS-405</scope>
    <scope>IDENTIFICATION BY MASS SPECTROMETRY [LARGE SCALE ANALYSIS]</scope>
</reference>
<gene>
    <name evidence="10" type="primary">PALM2AKAP2</name>
    <name type="synonym">KIAA0920</name>
    <name evidence="1" type="synonym">PAKAP</name>
    <name evidence="8" type="synonym">PALM2</name>
</gene>
<accession>Q9Y2D5</accession>
<accession>A9Z1X9</accession>
<accession>B1ALX9</accession>
<accession>B2RTU4</accession>
<accession>B3KQ00</accession>
<accession>B4DTZ2</accession>
<accession>B7ZW07</accession>
<accession>B9EJB5</accession>
<accession>Q8IXS6</accession>
<accession>Q8N9D5</accession>
<accession>Q96DU1</accession>
<accession>Q9UG26</accession>
<sequence length="1103" mass="122071">MAEAELHKERLQAIAEKRKRQTEIEGKRQQLDEQILLLQHSKSKVLREKWLLQGIPAGTAEEEEARRRQSEEDEFRVKQLEDNIQRLEQEIQTLESEESQISAKEQIILEKLKETEKSFKDFQKGFSSTDGDAVNYISSQLPDLPILCSRTAEPSPGQDGTSRAAGVGWENVLLKEGESASNATETSGPDMTIKKPPQLSEDDIWLKSEGDNYSATLLEPAASSLSPDHKNMEIEVSVAECKSVPGITSTPHPMDHPSAFYSPPHNGLLTDHHESLDNDVAREIRYLDEVLEANCCDSAVDGTYNGTSSPEPGAVVLVGGLSPPVHEATQPEPTERTASRQAPPHIELSNSSPDPMAEAERTNGHSPSQPRDALGDSLQVPVSPSSTTSSRCSSRDGEFTLTTLKKEAKFELRAFHEDKKPSKLFEDDEHEKEQYCIRKVRPSEEMLELEKERRELIRSQAVKKNPGIAAKWWNPPQEKTIEEQLDEEHLESHKKYKERKERRAQQEQLLLQKQLQQQQQQPPSQLCTAPASSHERASMIDKAKEDIVTEQIDFSAARKQFQLMENSRQAVAKGQSTPRLFSIKPFYRPLGSVNSDKPLTNPRPPSVGGPPEDSGASAAKGQKSPGALETPSAAGSQGNTASQGKEGPYSEPSKRGPLSKLWAEDGEFTSARAVLTVVKDDDHGILDQFSRSVNVSLTQEELDSGLDELSVRSQDTTVLETLSNDFSMDNISDSGASNETTNALQENSLADFSLPQTPQTDNPSEGRGEGVSKSFSDHGFYSPSSTLGDSPLVDDPLEYQAGLLVQNAIQQAIAEQVDKAVSKTSRDGAEQQGPEATVEEAEAAAFGSEKPQSMFEPPQVSSPVQEKRDVLPKILPAEDRALRERGPPQPLPAVQPSGPINMEETRPEGSYFSKYSEAAELRSTASLLATQESDVMVGPFKLRSRKQRTLSMIEEEIRAAQEREEELKRQRQVLQSTQSPRTKNAPSLPSRTCYKTAPGKIEKVKPPPSPTTEGPSLQPDLAPEEAAGTQRPKNLMQTLMEDYETHKSKRRERMDDSSYTSKLLSCKVTSEVLEATRVNRRKSALALRWEAGIYANQEEEDNE</sequence>